<comment type="function">
    <text evidence="3 4">Hydroxylase involved in the biosynthesis of cucurbitacin and mogroside tetracyclic triterpene natural products (e.g. siamenoside I and mogrosides IV, V and VI) (PubMed:26903528, PubMed:27821754). Cucurbitacins have cytotoxic properties and exhibit deterrent taste as a defense barrier against herbivores (PubMed:26903528, PubMed:27821754). Mogrosides are nonsugar highly oxygenated compounds used as high-intensity zero-calorie sweeteners; they also possess pharmacological properties such as regulating immunity, lowering blood sugar and lipid levels, protecting the liver, and acting as antioxidants and antitumor agents (PubMed:26903528, PubMed:27821754). Catalyzes the oxidation of cucurbitadienol at the C-11 position to produce 11-oxocucurbitadienol, a possible biosynthetic intermediate from cucurbitadienol to mogrol (PubMed:26903528, PubMed:27821754). Also mediates the conversion of 24,25-dihydroxycucurbitadienol to mogrol (PubMed:27821754).</text>
</comment>
<comment type="catalytic activity">
    <reaction evidence="3">
        <text>cucurbitadienol + 2 reduced [NADPH--hemoprotein reductase] + 2 O2 = 11-oxocucurbitadienol + 2 oxidized [NADPH--hemoprotein reductase] + 3 H2O + 2 H(+)</text>
        <dbReference type="Rhea" id="RHEA:55508"/>
        <dbReference type="Rhea" id="RHEA-COMP:11964"/>
        <dbReference type="Rhea" id="RHEA-COMP:11965"/>
        <dbReference type="ChEBI" id="CHEBI:15377"/>
        <dbReference type="ChEBI" id="CHEBI:15378"/>
        <dbReference type="ChEBI" id="CHEBI:15379"/>
        <dbReference type="ChEBI" id="CHEBI:57618"/>
        <dbReference type="ChEBI" id="CHEBI:58210"/>
        <dbReference type="ChEBI" id="CHEBI:62456"/>
        <dbReference type="ChEBI" id="CHEBI:138973"/>
        <dbReference type="EC" id="1.14.14.71"/>
    </reaction>
    <physiologicalReaction direction="left-to-right" evidence="3">
        <dbReference type="Rhea" id="RHEA:55509"/>
    </physiologicalReaction>
</comment>
<comment type="catalytic activity">
    <reaction evidence="3 4">
        <text>cucurbitadienol + reduced [NADPH--hemoprotein reductase] + O2 = 11-hydroxycucurbitadienol + oxidized [NADPH--hemoprotein reductase] + H2O + H(+)</text>
        <dbReference type="Rhea" id="RHEA:55512"/>
        <dbReference type="Rhea" id="RHEA-COMP:11964"/>
        <dbReference type="Rhea" id="RHEA-COMP:11965"/>
        <dbReference type="ChEBI" id="CHEBI:15377"/>
        <dbReference type="ChEBI" id="CHEBI:15378"/>
        <dbReference type="ChEBI" id="CHEBI:15379"/>
        <dbReference type="ChEBI" id="CHEBI:57618"/>
        <dbReference type="ChEBI" id="CHEBI:58210"/>
        <dbReference type="ChEBI" id="CHEBI:62456"/>
        <dbReference type="ChEBI" id="CHEBI:138972"/>
    </reaction>
    <physiologicalReaction direction="left-to-right" evidence="3 4">
        <dbReference type="Rhea" id="RHEA:55513"/>
    </physiologicalReaction>
</comment>
<comment type="catalytic activity">
    <reaction evidence="3">
        <text>11-hydroxycucurbitadienol + reduced [NADPH--hemoprotein reductase] + O2 = 11-oxocucurbitadienol + oxidized [NADPH--hemoprotein reductase] + 2 H2O + H(+)</text>
        <dbReference type="Rhea" id="RHEA:55516"/>
        <dbReference type="Rhea" id="RHEA-COMP:11964"/>
        <dbReference type="Rhea" id="RHEA-COMP:11965"/>
        <dbReference type="ChEBI" id="CHEBI:15377"/>
        <dbReference type="ChEBI" id="CHEBI:15378"/>
        <dbReference type="ChEBI" id="CHEBI:15379"/>
        <dbReference type="ChEBI" id="CHEBI:57618"/>
        <dbReference type="ChEBI" id="CHEBI:58210"/>
        <dbReference type="ChEBI" id="CHEBI:138972"/>
        <dbReference type="ChEBI" id="CHEBI:138973"/>
    </reaction>
    <physiologicalReaction direction="left-to-right" evidence="3">
        <dbReference type="Rhea" id="RHEA:55517"/>
    </physiologicalReaction>
</comment>
<comment type="catalytic activity">
    <reaction evidence="3">
        <text>(24R)-24,25-dihydroxycucurbitadienol + reduced [NADPH--hemoprotein reductase] + O2 = mogrol + oxidized [NADPH--hemoprotein reductase] + H2O + H(+)</text>
        <dbReference type="Rhea" id="RHEA:81859"/>
        <dbReference type="Rhea" id="RHEA-COMP:11964"/>
        <dbReference type="Rhea" id="RHEA-COMP:11965"/>
        <dbReference type="ChEBI" id="CHEBI:15377"/>
        <dbReference type="ChEBI" id="CHEBI:15378"/>
        <dbReference type="ChEBI" id="CHEBI:15379"/>
        <dbReference type="ChEBI" id="CHEBI:57618"/>
        <dbReference type="ChEBI" id="CHEBI:58210"/>
        <dbReference type="ChEBI" id="CHEBI:138974"/>
        <dbReference type="ChEBI" id="CHEBI:229950"/>
    </reaction>
    <physiologicalReaction direction="left-to-right" evidence="3">
        <dbReference type="Rhea" id="RHEA:81860"/>
    </physiologicalReaction>
</comment>
<comment type="cofactor">
    <cofactor evidence="1">
        <name>heme</name>
        <dbReference type="ChEBI" id="CHEBI:30413"/>
    </cofactor>
</comment>
<comment type="pathway">
    <text evidence="4">Secondary metabolite biosynthesis; terpenoid biosynthesis.</text>
</comment>
<comment type="subcellular location">
    <subcellularLocation>
        <location evidence="2">Membrane</location>
        <topology evidence="2">Single-pass membrane protein</topology>
    </subcellularLocation>
</comment>
<comment type="tissue specificity">
    <text evidence="4">Highly expressed in young fruits 15 days after anthesis (15-DAA) (PubMed:27821754). Also observed in roots (PubMed:27821754).</text>
</comment>
<comment type="biotechnology">
    <text evidence="5">C.sativus and L.esculentum expressing S.grosvenorii genes SgSQE1, SgCS, SgEPH2, SgP450, SgUGT269-1 and SgUGT289-3 accumulate siamenoside I and mogrosides III and V, thus providing a strategy for vegetable flavor improvement or for heterologous biosynthesis of mogrosides.</text>
</comment>
<comment type="miscellaneous">
    <text evidence="10">Mogrosides, the major active constituents of S.grosvenorii fruits, are a mixture of cucurbitane-type triterpenoid glycosides that have been proven to be powerful and zero-caloric sweeteners and can hence be used as a sucrose substitute for diabetic and obese patients.</text>
</comment>
<comment type="similarity">
    <text evidence="9">Belongs to the cytochrome P450 family.</text>
</comment>
<keyword id="KW-0349">Heme</keyword>
<keyword id="KW-0408">Iron</keyword>
<keyword id="KW-0472">Membrane</keyword>
<keyword id="KW-0479">Metal-binding</keyword>
<keyword id="KW-0503">Monooxygenase</keyword>
<keyword id="KW-0560">Oxidoreductase</keyword>
<keyword id="KW-0812">Transmembrane</keyword>
<keyword id="KW-1133">Transmembrane helix</keyword>
<gene>
    <name evidence="6 7" type="primary">CYP87D18</name>
    <name evidence="11" type="synonym">P450-5</name>
</gene>
<protein>
    <recommendedName>
        <fullName evidence="9">Cucurbitadienol 11-hydroxylase</fullName>
        <ecNumber evidence="3">1.14.14.71</ecNumber>
    </recommendedName>
    <alternativeName>
        <fullName evidence="6 7">Cytochrome P450 87D18</fullName>
        <shortName evidence="8">SgP450</shortName>
    </alternativeName>
    <alternativeName>
        <fullName evidence="9">Mogrol synthase</fullName>
        <ecNumber evidence="4">1.14.14.-</ecNumber>
    </alternativeName>
</protein>
<evidence type="ECO:0000250" key="1">
    <source>
        <dbReference type="UniProtKB" id="Q93VK5"/>
    </source>
</evidence>
<evidence type="ECO:0000255" key="2"/>
<evidence type="ECO:0000269" key="3">
    <source>
    </source>
</evidence>
<evidence type="ECO:0000269" key="4">
    <source>
    </source>
</evidence>
<evidence type="ECO:0000269" key="5">
    <source>
    </source>
</evidence>
<evidence type="ECO:0000303" key="6">
    <source>
    </source>
</evidence>
<evidence type="ECO:0000303" key="7">
    <source>
    </source>
</evidence>
<evidence type="ECO:0000303" key="8">
    <source>
    </source>
</evidence>
<evidence type="ECO:0000305" key="9"/>
<evidence type="ECO:0000305" key="10">
    <source>
    </source>
</evidence>
<evidence type="ECO:0000312" key="11">
    <source>
        <dbReference type="EMBL" id="AEM42986.1"/>
    </source>
</evidence>
<sequence>MWTVVLGLATLFVAYYIHWINKWRDSKFNGVLPPGTMGLPLIGETIQLSRPSDSLDVHPFIQKKVERYGPIFKTCLAGRPVVVSADAEFNNYIMLQEGRAVEMWYLDTLSKFFGLDTEWLKALGLIHKYIRSITLNHFGAEALRERFLPFIEASSMEALHSWSTQPSVEVKNASALMVFRTSVNKMFGEDAKKLSGNIPGKFTKLLGGFLSLPLNFPGTTYHKCLKDMKEIQKKLREVVDDRLANVGPDVEDFLGQALKDKESEKFISEEFIIQLLFSISFASFESISTTLTLILKLLDEHPEVVKELEAEHEAIRKARADPDGPITWEEYKSMTFTLQVINETLRLGSVTPALLRKTVKDLQVKGYIIPEGWTIMLVTASRHRDPKVYKDPHIFNPWRWKDLDSITIQKNFMPFGGGLRHCAGAEYSKVYLCTFLHILCTKYRWTKLGGGTIARAHILSFEDGLHVKFTPKE</sequence>
<accession>K7NBR2</accession>
<accession>G1DGI4</accession>
<reference key="1">
    <citation type="submission" date="2010-08" db="EMBL/GenBank/DDBJ databases">
        <title>Cloning of genes related to mogrosides biosynthesis in Siraitia grosvenorii.</title>
        <authorList>
            <person name="Tang Q."/>
            <person name="Ma X.J."/>
            <person name="Zhao H."/>
            <person name="Mo C.M."/>
        </authorList>
    </citation>
    <scope>NUCLEOTIDE SEQUENCE [MRNA]</scope>
</reference>
<reference key="2">
    <citation type="journal article" date="2011" name="BMC Genomics">
        <title>An efficient approach to finding Siraitia grosvenorii triterpene biosynthetic genes by RNA-seq and digital gene expression analysis.</title>
        <authorList>
            <person name="Tang Q."/>
            <person name="Ma X.J."/>
            <person name="Mo C.M."/>
            <person name="Wilson I.W."/>
            <person name="Song C."/>
            <person name="Zhao H."/>
            <person name="Yang Y.F."/>
            <person name="Fu W."/>
            <person name="Qiu D.Y."/>
        </authorList>
    </citation>
    <scope>NUCLEOTIDE SEQUENCE [MRNA] OF 1-444</scope>
</reference>
<reference key="3">
    <citation type="journal article" date="2016" name="Proc. Natl. Acad. Sci. U.S.A.">
        <title>The biosynthetic pathway of the nonsugar, high-intensity sweetener mogroside V from Siraitia grosvenorii.</title>
        <authorList>
            <person name="Itkin M."/>
            <person name="Davidovich-Rikanati R."/>
            <person name="Cohen S."/>
            <person name="Portnoy V."/>
            <person name="Doron-Faigenboim A."/>
            <person name="Oren E."/>
            <person name="Freilich S."/>
            <person name="Tzuri G."/>
            <person name="Baranes N."/>
            <person name="Shen S."/>
            <person name="Petreikov M."/>
            <person name="Sertchook R."/>
            <person name="Ben-Dor S."/>
            <person name="Gottlieb H."/>
            <person name="Hernandez A."/>
            <person name="Nelson D.R."/>
            <person name="Paris H.S."/>
            <person name="Tadmor Y."/>
            <person name="Burger Y."/>
            <person name="Lewinsohn E."/>
            <person name="Katzir N."/>
            <person name="Schaffer A."/>
        </authorList>
    </citation>
    <scope>NUCLEOTIDE SEQUENCE</scope>
    <scope>FUNCTION</scope>
    <scope>CATALYTIC ACTIVITY</scope>
    <scope>PATHWAY</scope>
    <scope>TISSUE SPECIFICITY</scope>
    <scope>GENE FAMILY</scope>
    <scope>NOMENCLATURE</scope>
</reference>
<reference key="4">
    <citation type="journal article" date="2016" name="Plant Cell Physiol.">
        <title>Oxidation of cucurbitadienol catalyzed by CYP87D18 in the biosynthesis of mogrosides from Siraitia grosvenorii.</title>
        <authorList>
            <person name="Zhang J."/>
            <person name="Dai L."/>
            <person name="Yang J."/>
            <person name="Liu C."/>
            <person name="Men Y."/>
            <person name="Zeng Y."/>
            <person name="Cai Y."/>
            <person name="Zhu Y."/>
            <person name="Sun Y."/>
        </authorList>
    </citation>
    <scope>FUNCTION</scope>
    <scope>CATALYTIC ACTIVITY</scope>
</reference>
<reference key="5">
    <citation type="journal article" date="2023" name="Commun. Biol.">
        <title>Heterologous mogrosides biosynthesis in cucumber and tomato by genetic manipulation.</title>
        <authorList>
            <person name="Liao J."/>
            <person name="Liu T."/>
            <person name="Xie L."/>
            <person name="Mo C."/>
            <person name="Qiao J."/>
            <person name="Huang X."/>
            <person name="Cui S."/>
            <person name="Jia X."/>
            <person name="Luo Z."/>
            <person name="Ma X."/>
        </authorList>
    </citation>
    <scope>BIOTECHNOLOGY</scope>
</reference>
<feature type="chain" id="PRO_0000451487" description="Cucurbitadienol 11-hydroxylase">
    <location>
        <begin position="1"/>
        <end position="473"/>
    </location>
</feature>
<feature type="transmembrane region" description="Helical" evidence="2">
    <location>
        <begin position="4"/>
        <end position="24"/>
    </location>
</feature>
<feature type="binding site" description="axial binding residue" evidence="1">
    <location>
        <position position="422"/>
    </location>
    <ligand>
        <name>heme</name>
        <dbReference type="ChEBI" id="CHEBI:30413"/>
    </ligand>
    <ligandPart>
        <name>Fe</name>
        <dbReference type="ChEBI" id="CHEBI:18248"/>
    </ligandPart>
</feature>
<name>C87DR_SIRGR</name>
<dbReference type="EC" id="1.14.14.71" evidence="3"/>
<dbReference type="EC" id="1.14.14.-" evidence="4"/>
<dbReference type="EMBL" id="HQ128571">
    <property type="protein sequence ID" value="AEM42986.1"/>
    <property type="molecule type" value="mRNA"/>
</dbReference>
<dbReference type="EMBL" id="JL554667">
    <property type="protein sequence ID" value="AEG64830.1"/>
    <property type="molecule type" value="mRNA"/>
</dbReference>
<dbReference type="SMR" id="K7NBR2"/>
<dbReference type="KEGG" id="ag:AEM42986"/>
<dbReference type="BioCyc" id="MetaCyc:MONOMER-21295"/>
<dbReference type="UniPathway" id="UPA00213"/>
<dbReference type="GO" id="GO:0016020">
    <property type="term" value="C:membrane"/>
    <property type="evidence" value="ECO:0007669"/>
    <property type="project" value="UniProtKB-SubCell"/>
</dbReference>
<dbReference type="GO" id="GO:0020037">
    <property type="term" value="F:heme binding"/>
    <property type="evidence" value="ECO:0007669"/>
    <property type="project" value="InterPro"/>
</dbReference>
<dbReference type="GO" id="GO:0005506">
    <property type="term" value="F:iron ion binding"/>
    <property type="evidence" value="ECO:0007669"/>
    <property type="project" value="InterPro"/>
</dbReference>
<dbReference type="GO" id="GO:0016712">
    <property type="term" value="F:oxidoreductase activity, acting on paired donors, with incorporation or reduction of molecular oxygen, reduced flavin or flavoprotein as one donor, and incorporation of one atom of oxygen"/>
    <property type="evidence" value="ECO:0000314"/>
    <property type="project" value="UniProtKB"/>
</dbReference>
<dbReference type="GO" id="GO:0016132">
    <property type="term" value="P:brassinosteroid biosynthetic process"/>
    <property type="evidence" value="ECO:0007669"/>
    <property type="project" value="TreeGrafter"/>
</dbReference>
<dbReference type="GO" id="GO:0010268">
    <property type="term" value="P:brassinosteroid homeostasis"/>
    <property type="evidence" value="ECO:0007669"/>
    <property type="project" value="TreeGrafter"/>
</dbReference>
<dbReference type="GO" id="GO:0016125">
    <property type="term" value="P:sterol metabolic process"/>
    <property type="evidence" value="ECO:0007669"/>
    <property type="project" value="TreeGrafter"/>
</dbReference>
<dbReference type="Gene3D" id="1.10.630.10">
    <property type="entry name" value="Cytochrome P450"/>
    <property type="match status" value="1"/>
</dbReference>
<dbReference type="InterPro" id="IPR001128">
    <property type="entry name" value="Cyt_P450"/>
</dbReference>
<dbReference type="InterPro" id="IPR017972">
    <property type="entry name" value="Cyt_P450_CS"/>
</dbReference>
<dbReference type="InterPro" id="IPR002401">
    <property type="entry name" value="Cyt_P450_E_grp-I"/>
</dbReference>
<dbReference type="InterPro" id="IPR036396">
    <property type="entry name" value="Cyt_P450_sf"/>
</dbReference>
<dbReference type="PANTHER" id="PTHR24286:SF369">
    <property type="entry name" value="CYTOCHROME P450"/>
    <property type="match status" value="1"/>
</dbReference>
<dbReference type="PANTHER" id="PTHR24286">
    <property type="entry name" value="CYTOCHROME P450 26"/>
    <property type="match status" value="1"/>
</dbReference>
<dbReference type="Pfam" id="PF00067">
    <property type="entry name" value="p450"/>
    <property type="match status" value="1"/>
</dbReference>
<dbReference type="PRINTS" id="PR00463">
    <property type="entry name" value="EP450I"/>
</dbReference>
<dbReference type="SUPFAM" id="SSF48264">
    <property type="entry name" value="Cytochrome P450"/>
    <property type="match status" value="1"/>
</dbReference>
<dbReference type="PROSITE" id="PS00086">
    <property type="entry name" value="CYTOCHROME_P450"/>
    <property type="match status" value="1"/>
</dbReference>
<organism>
    <name type="scientific">Siraitia grosvenorii</name>
    <name type="common">Monk's fruit</name>
    <name type="synonym">Luo han guo</name>
    <dbReference type="NCBI Taxonomy" id="190515"/>
    <lineage>
        <taxon>Eukaryota</taxon>
        <taxon>Viridiplantae</taxon>
        <taxon>Streptophyta</taxon>
        <taxon>Embryophyta</taxon>
        <taxon>Tracheophyta</taxon>
        <taxon>Spermatophyta</taxon>
        <taxon>Magnoliopsida</taxon>
        <taxon>eudicotyledons</taxon>
        <taxon>Gunneridae</taxon>
        <taxon>Pentapetalae</taxon>
        <taxon>rosids</taxon>
        <taxon>fabids</taxon>
        <taxon>Cucurbitales</taxon>
        <taxon>Cucurbitaceae</taxon>
        <taxon>Siraitieae</taxon>
        <taxon>Siraitia</taxon>
    </lineage>
</organism>
<proteinExistence type="evidence at protein level"/>